<proteinExistence type="inferred from homology"/>
<protein>
    <recommendedName>
        <fullName evidence="1">UDP-N-acetylglucosamine 1-carboxyvinyltransferase 2</fullName>
        <ecNumber evidence="1">2.5.1.7</ecNumber>
    </recommendedName>
    <alternativeName>
        <fullName evidence="1">Enoylpyruvate transferase 2</fullName>
    </alternativeName>
    <alternativeName>
        <fullName evidence="1">UDP-N-acetylglucosamine enolpyruvyl transferase 2</fullName>
        <shortName evidence="1">EPT 2</shortName>
    </alternativeName>
</protein>
<sequence>MRKIIINGGKALSGEVAVSGAKNSVVALIPAIILADDIVILDGVPAISDVDSLIEIMELMGATVNYHGDTLEIDPRGVQDIPMPYGKINSLRASYYFYGSLLGRFGQAVVGLPGGCDLGPRPIDLHLKAFEAMGVEVSYEGENMNLSTNGQKIHGAHIYMDTVSVGATINTMVAATKAQGKTVIENAAREPEIIDVATLLNNMGAHIRGAGTDIITIQGVQKLHGTRHQVIPDRIEAGTYIALAAAIGKGVKITNVLYEHLESFIAKLEEMGVRMTVEEDAIFVEKQESLKAITIKTSPYPGFATDLQQPLTPLLLKADGRGTIIDTIYEKRINHVPELMRMGADISVIGGQIVYQGPSRLTGAQVKATDLRAGAALVTAGLMAEGKTEITNIEFILRGYASIIAKLTALGADIQLIED</sequence>
<keyword id="KW-0131">Cell cycle</keyword>
<keyword id="KW-0132">Cell division</keyword>
<keyword id="KW-0133">Cell shape</keyword>
<keyword id="KW-0961">Cell wall biogenesis/degradation</keyword>
<keyword id="KW-0963">Cytoplasm</keyword>
<keyword id="KW-0573">Peptidoglycan synthesis</keyword>
<keyword id="KW-0670">Pyruvate</keyword>
<keyword id="KW-0808">Transferase</keyword>
<organism>
    <name type="scientific">Streptococcus pyogenes serotype M3 (strain ATCC BAA-595 / MGAS315)</name>
    <dbReference type="NCBI Taxonomy" id="198466"/>
    <lineage>
        <taxon>Bacteria</taxon>
        <taxon>Bacillati</taxon>
        <taxon>Bacillota</taxon>
        <taxon>Bacilli</taxon>
        <taxon>Lactobacillales</taxon>
        <taxon>Streptococcaceae</taxon>
        <taxon>Streptococcus</taxon>
    </lineage>
</organism>
<comment type="function">
    <text evidence="1">Cell wall formation. Adds enolpyruvyl to UDP-N-acetylglucosamine.</text>
</comment>
<comment type="catalytic activity">
    <reaction evidence="1">
        <text>phosphoenolpyruvate + UDP-N-acetyl-alpha-D-glucosamine = UDP-N-acetyl-3-O-(1-carboxyvinyl)-alpha-D-glucosamine + phosphate</text>
        <dbReference type="Rhea" id="RHEA:18681"/>
        <dbReference type="ChEBI" id="CHEBI:43474"/>
        <dbReference type="ChEBI" id="CHEBI:57705"/>
        <dbReference type="ChEBI" id="CHEBI:58702"/>
        <dbReference type="ChEBI" id="CHEBI:68483"/>
        <dbReference type="EC" id="2.5.1.7"/>
    </reaction>
</comment>
<comment type="pathway">
    <text evidence="1">Cell wall biogenesis; peptidoglycan biosynthesis.</text>
</comment>
<comment type="subcellular location">
    <subcellularLocation>
        <location evidence="1">Cytoplasm</location>
    </subcellularLocation>
</comment>
<comment type="similarity">
    <text evidence="1">Belongs to the EPSP synthase family. MurA subfamily.</text>
</comment>
<comment type="sequence caution" evidence="2">
    <conflict type="erroneous initiation">
        <sequence resource="EMBL-CDS" id="AAM79640"/>
    </conflict>
</comment>
<reference key="1">
    <citation type="journal article" date="2002" name="Proc. Natl. Acad. Sci. U.S.A.">
        <title>Genome sequence of a serotype M3 strain of group A Streptococcus: phage-encoded toxins, the high-virulence phenotype, and clone emergence.</title>
        <authorList>
            <person name="Beres S.B."/>
            <person name="Sylva G.L."/>
            <person name="Barbian K.D."/>
            <person name="Lei B."/>
            <person name="Hoff J.S."/>
            <person name="Mammarella N.D."/>
            <person name="Liu M.-Y."/>
            <person name="Smoot J.C."/>
            <person name="Porcella S.F."/>
            <person name="Parkins L.D."/>
            <person name="Campbell D.S."/>
            <person name="Smith T.M."/>
            <person name="McCormick J.K."/>
            <person name="Leung D.Y.M."/>
            <person name="Schlievert P.M."/>
            <person name="Musser J.M."/>
        </authorList>
    </citation>
    <scope>NUCLEOTIDE SEQUENCE [LARGE SCALE GENOMIC DNA]</scope>
    <source>
        <strain>ATCC BAA-595 / MGAS315</strain>
    </source>
</reference>
<evidence type="ECO:0000255" key="1">
    <source>
        <dbReference type="HAMAP-Rule" id="MF_00111"/>
    </source>
</evidence>
<evidence type="ECO:0000305" key="2"/>
<feature type="chain" id="PRO_0000178937" description="UDP-N-acetylglucosamine 1-carboxyvinyltransferase 2">
    <location>
        <begin position="1"/>
        <end position="419"/>
    </location>
</feature>
<feature type="active site" description="Proton donor" evidence="1">
    <location>
        <position position="116"/>
    </location>
</feature>
<feature type="binding site" evidence="1">
    <location>
        <begin position="22"/>
        <end position="23"/>
    </location>
    <ligand>
        <name>phosphoenolpyruvate</name>
        <dbReference type="ChEBI" id="CHEBI:58702"/>
    </ligand>
</feature>
<feature type="binding site" evidence="1">
    <location>
        <position position="92"/>
    </location>
    <ligand>
        <name>UDP-N-acetyl-alpha-D-glucosamine</name>
        <dbReference type="ChEBI" id="CHEBI:57705"/>
    </ligand>
</feature>
<feature type="binding site" evidence="1">
    <location>
        <begin position="121"/>
        <end position="125"/>
    </location>
    <ligand>
        <name>UDP-N-acetyl-alpha-D-glucosamine</name>
        <dbReference type="ChEBI" id="CHEBI:57705"/>
    </ligand>
</feature>
<feature type="binding site" evidence="1">
    <location>
        <position position="306"/>
    </location>
    <ligand>
        <name>UDP-N-acetyl-alpha-D-glucosamine</name>
        <dbReference type="ChEBI" id="CHEBI:57705"/>
    </ligand>
</feature>
<feature type="binding site" evidence="1">
    <location>
        <position position="328"/>
    </location>
    <ligand>
        <name>UDP-N-acetyl-alpha-D-glucosamine</name>
        <dbReference type="ChEBI" id="CHEBI:57705"/>
    </ligand>
</feature>
<feature type="modified residue" description="2-(S-cysteinyl)pyruvic acid O-phosphothioketal" evidence="1">
    <location>
        <position position="116"/>
    </location>
</feature>
<dbReference type="EC" id="2.5.1.7" evidence="1"/>
<dbReference type="EMBL" id="AE014074">
    <property type="protein sequence ID" value="AAM79640.1"/>
    <property type="status" value="ALT_INIT"/>
    <property type="molecule type" value="Genomic_DNA"/>
</dbReference>
<dbReference type="RefSeq" id="WP_011054631.1">
    <property type="nucleotide sequence ID" value="NC_004070.1"/>
</dbReference>
<dbReference type="SMR" id="P0DC46"/>
<dbReference type="KEGG" id="spg:SpyM3_1033"/>
<dbReference type="HOGENOM" id="CLU_027387_0_0_9"/>
<dbReference type="UniPathway" id="UPA00219"/>
<dbReference type="Proteomes" id="UP000000564">
    <property type="component" value="Chromosome"/>
</dbReference>
<dbReference type="GO" id="GO:0005737">
    <property type="term" value="C:cytoplasm"/>
    <property type="evidence" value="ECO:0007669"/>
    <property type="project" value="UniProtKB-SubCell"/>
</dbReference>
<dbReference type="GO" id="GO:0008760">
    <property type="term" value="F:UDP-N-acetylglucosamine 1-carboxyvinyltransferase activity"/>
    <property type="evidence" value="ECO:0007669"/>
    <property type="project" value="UniProtKB-UniRule"/>
</dbReference>
<dbReference type="GO" id="GO:0051301">
    <property type="term" value="P:cell division"/>
    <property type="evidence" value="ECO:0007669"/>
    <property type="project" value="UniProtKB-KW"/>
</dbReference>
<dbReference type="GO" id="GO:0071555">
    <property type="term" value="P:cell wall organization"/>
    <property type="evidence" value="ECO:0007669"/>
    <property type="project" value="UniProtKB-KW"/>
</dbReference>
<dbReference type="GO" id="GO:0009252">
    <property type="term" value="P:peptidoglycan biosynthetic process"/>
    <property type="evidence" value="ECO:0007669"/>
    <property type="project" value="UniProtKB-UniRule"/>
</dbReference>
<dbReference type="GO" id="GO:0008360">
    <property type="term" value="P:regulation of cell shape"/>
    <property type="evidence" value="ECO:0007669"/>
    <property type="project" value="UniProtKB-KW"/>
</dbReference>
<dbReference type="GO" id="GO:0019277">
    <property type="term" value="P:UDP-N-acetylgalactosamine biosynthetic process"/>
    <property type="evidence" value="ECO:0007669"/>
    <property type="project" value="InterPro"/>
</dbReference>
<dbReference type="CDD" id="cd01555">
    <property type="entry name" value="UdpNAET"/>
    <property type="match status" value="1"/>
</dbReference>
<dbReference type="FunFam" id="3.65.10.10:FF:000001">
    <property type="entry name" value="UDP-N-acetylglucosamine 1-carboxyvinyltransferase"/>
    <property type="match status" value="1"/>
</dbReference>
<dbReference type="Gene3D" id="3.65.10.10">
    <property type="entry name" value="Enolpyruvate transferase domain"/>
    <property type="match status" value="2"/>
</dbReference>
<dbReference type="HAMAP" id="MF_00111">
    <property type="entry name" value="MurA"/>
    <property type="match status" value="1"/>
</dbReference>
<dbReference type="InterPro" id="IPR001986">
    <property type="entry name" value="Enolpyruvate_Tfrase_dom"/>
</dbReference>
<dbReference type="InterPro" id="IPR036968">
    <property type="entry name" value="Enolpyruvate_Tfrase_sf"/>
</dbReference>
<dbReference type="InterPro" id="IPR050068">
    <property type="entry name" value="MurA_subfamily"/>
</dbReference>
<dbReference type="InterPro" id="IPR013792">
    <property type="entry name" value="RNA3'P_cycl/enolpyr_Trfase_a/b"/>
</dbReference>
<dbReference type="InterPro" id="IPR005750">
    <property type="entry name" value="UDP_GlcNAc_COvinyl_MurA"/>
</dbReference>
<dbReference type="NCBIfam" id="TIGR01072">
    <property type="entry name" value="murA"/>
    <property type="match status" value="1"/>
</dbReference>
<dbReference type="NCBIfam" id="NF006873">
    <property type="entry name" value="PRK09369.1"/>
    <property type="match status" value="1"/>
</dbReference>
<dbReference type="NCBIfam" id="NF009470">
    <property type="entry name" value="PRK12830.1"/>
    <property type="match status" value="1"/>
</dbReference>
<dbReference type="PANTHER" id="PTHR43783">
    <property type="entry name" value="UDP-N-ACETYLGLUCOSAMINE 1-CARBOXYVINYLTRANSFERASE"/>
    <property type="match status" value="1"/>
</dbReference>
<dbReference type="PANTHER" id="PTHR43783:SF2">
    <property type="entry name" value="UDP-N-ACETYLGLUCOSAMINE 1-CARBOXYVINYLTRANSFERASE 2"/>
    <property type="match status" value="1"/>
</dbReference>
<dbReference type="Pfam" id="PF00275">
    <property type="entry name" value="EPSP_synthase"/>
    <property type="match status" value="1"/>
</dbReference>
<dbReference type="SUPFAM" id="SSF55205">
    <property type="entry name" value="EPT/RTPC-like"/>
    <property type="match status" value="1"/>
</dbReference>
<accession>P0DC46</accession>
<accession>Q878W4</accession>
<accession>Q8K716</accession>
<gene>
    <name evidence="1" type="primary">murA2</name>
    <name type="synonym">murZ</name>
    <name type="ordered locus">SpyM3_1033</name>
</gene>
<name>MURA2_STRP3</name>